<keyword id="KW-0687">Ribonucleoprotein</keyword>
<keyword id="KW-0689">Ribosomal protein</keyword>
<keyword id="KW-0694">RNA-binding</keyword>
<keyword id="KW-0699">rRNA-binding</keyword>
<keyword id="KW-0820">tRNA-binding</keyword>
<accession>C4ZBU3</accession>
<name>RS13_AGARV</name>
<reference key="1">
    <citation type="journal article" date="2009" name="Proc. Natl. Acad. Sci. U.S.A.">
        <title>Characterizing a model human gut microbiota composed of members of its two dominant bacterial phyla.</title>
        <authorList>
            <person name="Mahowald M.A."/>
            <person name="Rey F.E."/>
            <person name="Seedorf H."/>
            <person name="Turnbaugh P.J."/>
            <person name="Fulton R.S."/>
            <person name="Wollam A."/>
            <person name="Shah N."/>
            <person name="Wang C."/>
            <person name="Magrini V."/>
            <person name="Wilson R.K."/>
            <person name="Cantarel B.L."/>
            <person name="Coutinho P.M."/>
            <person name="Henrissat B."/>
            <person name="Crock L.W."/>
            <person name="Russell A."/>
            <person name="Verberkmoes N.C."/>
            <person name="Hettich R.L."/>
            <person name="Gordon J.I."/>
        </authorList>
    </citation>
    <scope>NUCLEOTIDE SEQUENCE [LARGE SCALE GENOMIC DNA]</scope>
    <source>
        <strain>ATCC 33656 / DSM 3377 / JCM 17463 / KCTC 5835 / LMG 30912 / VPI 0990</strain>
    </source>
</reference>
<feature type="chain" id="PRO_1000214393" description="Small ribosomal subunit protein uS13">
    <location>
        <begin position="1"/>
        <end position="122"/>
    </location>
</feature>
<feature type="region of interest" description="Disordered" evidence="2">
    <location>
        <begin position="95"/>
        <end position="122"/>
    </location>
</feature>
<proteinExistence type="inferred from homology"/>
<comment type="function">
    <text evidence="1">Located at the top of the head of the 30S subunit, it contacts several helices of the 16S rRNA. In the 70S ribosome it contacts the 23S rRNA (bridge B1a) and protein L5 of the 50S subunit (bridge B1b), connecting the 2 subunits; these bridges are implicated in subunit movement. Contacts the tRNAs in the A and P-sites.</text>
</comment>
<comment type="subunit">
    <text evidence="1">Part of the 30S ribosomal subunit. Forms a loose heterodimer with protein S19. Forms two bridges to the 50S subunit in the 70S ribosome.</text>
</comment>
<comment type="similarity">
    <text evidence="1">Belongs to the universal ribosomal protein uS13 family.</text>
</comment>
<evidence type="ECO:0000255" key="1">
    <source>
        <dbReference type="HAMAP-Rule" id="MF_01315"/>
    </source>
</evidence>
<evidence type="ECO:0000256" key="2">
    <source>
        <dbReference type="SAM" id="MobiDB-lite"/>
    </source>
</evidence>
<evidence type="ECO:0000305" key="3"/>
<sequence length="122" mass="13809">MARIAGVDLPREKRVEIGLTYIYGIGRVSADRILEAANVDPSTRVRDLTDDEVKRISAVIDETMTVEGDLRREIALNIKRLQEIGCYRGIRHRKGLPVRGQKTKTNARTRKGPKRTVANKKK</sequence>
<organism>
    <name type="scientific">Agathobacter rectalis (strain ATCC 33656 / DSM 3377 / JCM 17463 / KCTC 5835 / VPI 0990)</name>
    <name type="common">Eubacterium rectale</name>
    <dbReference type="NCBI Taxonomy" id="515619"/>
    <lineage>
        <taxon>Bacteria</taxon>
        <taxon>Bacillati</taxon>
        <taxon>Bacillota</taxon>
        <taxon>Clostridia</taxon>
        <taxon>Lachnospirales</taxon>
        <taxon>Lachnospiraceae</taxon>
        <taxon>Agathobacter</taxon>
    </lineage>
</organism>
<gene>
    <name evidence="1" type="primary">rpsM</name>
    <name type="ordered locus">EUBREC_0442</name>
</gene>
<dbReference type="EMBL" id="CP001107">
    <property type="protein sequence ID" value="ACR74233.1"/>
    <property type="molecule type" value="Genomic_DNA"/>
</dbReference>
<dbReference type="RefSeq" id="WP_012741350.1">
    <property type="nucleotide sequence ID" value="NZ_CAXSYD010000003.1"/>
</dbReference>
<dbReference type="SMR" id="C4ZBU3"/>
<dbReference type="STRING" id="515619.EUBREC_0442"/>
<dbReference type="PaxDb" id="515619-EUBREC_0442"/>
<dbReference type="GeneID" id="86987353"/>
<dbReference type="KEGG" id="ere:EUBREC_0442"/>
<dbReference type="HOGENOM" id="CLU_103849_1_2_9"/>
<dbReference type="Proteomes" id="UP000001477">
    <property type="component" value="Chromosome"/>
</dbReference>
<dbReference type="GO" id="GO:0005829">
    <property type="term" value="C:cytosol"/>
    <property type="evidence" value="ECO:0007669"/>
    <property type="project" value="TreeGrafter"/>
</dbReference>
<dbReference type="GO" id="GO:0015935">
    <property type="term" value="C:small ribosomal subunit"/>
    <property type="evidence" value="ECO:0007669"/>
    <property type="project" value="TreeGrafter"/>
</dbReference>
<dbReference type="GO" id="GO:0019843">
    <property type="term" value="F:rRNA binding"/>
    <property type="evidence" value="ECO:0007669"/>
    <property type="project" value="UniProtKB-UniRule"/>
</dbReference>
<dbReference type="GO" id="GO:0003735">
    <property type="term" value="F:structural constituent of ribosome"/>
    <property type="evidence" value="ECO:0007669"/>
    <property type="project" value="InterPro"/>
</dbReference>
<dbReference type="GO" id="GO:0000049">
    <property type="term" value="F:tRNA binding"/>
    <property type="evidence" value="ECO:0007669"/>
    <property type="project" value="UniProtKB-UniRule"/>
</dbReference>
<dbReference type="GO" id="GO:0006412">
    <property type="term" value="P:translation"/>
    <property type="evidence" value="ECO:0007669"/>
    <property type="project" value="UniProtKB-UniRule"/>
</dbReference>
<dbReference type="FunFam" id="1.10.8.50:FF:000001">
    <property type="entry name" value="30S ribosomal protein S13"/>
    <property type="match status" value="1"/>
</dbReference>
<dbReference type="FunFam" id="4.10.910.10:FF:000001">
    <property type="entry name" value="30S ribosomal protein S13"/>
    <property type="match status" value="1"/>
</dbReference>
<dbReference type="Gene3D" id="1.10.8.50">
    <property type="match status" value="1"/>
</dbReference>
<dbReference type="Gene3D" id="4.10.910.10">
    <property type="entry name" value="30s ribosomal protein s13, domain 2"/>
    <property type="match status" value="1"/>
</dbReference>
<dbReference type="HAMAP" id="MF_01315">
    <property type="entry name" value="Ribosomal_uS13"/>
    <property type="match status" value="1"/>
</dbReference>
<dbReference type="InterPro" id="IPR027437">
    <property type="entry name" value="Rbsml_uS13_C"/>
</dbReference>
<dbReference type="InterPro" id="IPR001892">
    <property type="entry name" value="Ribosomal_uS13"/>
</dbReference>
<dbReference type="InterPro" id="IPR010979">
    <property type="entry name" value="Ribosomal_uS13-like_H2TH"/>
</dbReference>
<dbReference type="InterPro" id="IPR019980">
    <property type="entry name" value="Ribosomal_uS13_bac-type"/>
</dbReference>
<dbReference type="InterPro" id="IPR018269">
    <property type="entry name" value="Ribosomal_uS13_CS"/>
</dbReference>
<dbReference type="NCBIfam" id="TIGR03631">
    <property type="entry name" value="uS13_bact"/>
    <property type="match status" value="1"/>
</dbReference>
<dbReference type="PANTHER" id="PTHR10871">
    <property type="entry name" value="30S RIBOSOMAL PROTEIN S13/40S RIBOSOMAL PROTEIN S18"/>
    <property type="match status" value="1"/>
</dbReference>
<dbReference type="PANTHER" id="PTHR10871:SF1">
    <property type="entry name" value="SMALL RIBOSOMAL SUBUNIT PROTEIN US13M"/>
    <property type="match status" value="1"/>
</dbReference>
<dbReference type="Pfam" id="PF00416">
    <property type="entry name" value="Ribosomal_S13"/>
    <property type="match status" value="1"/>
</dbReference>
<dbReference type="PIRSF" id="PIRSF002134">
    <property type="entry name" value="Ribosomal_S13"/>
    <property type="match status" value="1"/>
</dbReference>
<dbReference type="SUPFAM" id="SSF46946">
    <property type="entry name" value="S13-like H2TH domain"/>
    <property type="match status" value="1"/>
</dbReference>
<dbReference type="PROSITE" id="PS00646">
    <property type="entry name" value="RIBOSOMAL_S13_1"/>
    <property type="match status" value="1"/>
</dbReference>
<dbReference type="PROSITE" id="PS50159">
    <property type="entry name" value="RIBOSOMAL_S13_2"/>
    <property type="match status" value="1"/>
</dbReference>
<protein>
    <recommendedName>
        <fullName evidence="1">Small ribosomal subunit protein uS13</fullName>
    </recommendedName>
    <alternativeName>
        <fullName evidence="3">30S ribosomal protein S13</fullName>
    </alternativeName>
</protein>